<name>ALR_MACCJ</name>
<keyword id="KW-0413">Isomerase</keyword>
<keyword id="KW-0663">Pyridoxal phosphate</keyword>
<keyword id="KW-1185">Reference proteome</keyword>
<comment type="function">
    <text evidence="1">Catalyzes the interconversion of L-alanine and D-alanine. May also act on other amino acids.</text>
</comment>
<comment type="catalytic activity">
    <reaction evidence="1">
        <text>L-alanine = D-alanine</text>
        <dbReference type="Rhea" id="RHEA:20249"/>
        <dbReference type="ChEBI" id="CHEBI:57416"/>
        <dbReference type="ChEBI" id="CHEBI:57972"/>
        <dbReference type="EC" id="5.1.1.1"/>
    </reaction>
</comment>
<comment type="cofactor">
    <cofactor evidence="1">
        <name>pyridoxal 5'-phosphate</name>
        <dbReference type="ChEBI" id="CHEBI:597326"/>
    </cofactor>
</comment>
<comment type="pathway">
    <text evidence="1">Amino-acid biosynthesis; D-alanine biosynthesis; D-alanine from L-alanine: step 1/1.</text>
</comment>
<comment type="similarity">
    <text evidence="1">Belongs to the alanine racemase family.</text>
</comment>
<proteinExistence type="inferred from homology"/>
<organism>
    <name type="scientific">Macrococcus caseolyticus (strain JCSC5402)</name>
    <name type="common">Macrococcoides caseolyticum</name>
    <dbReference type="NCBI Taxonomy" id="458233"/>
    <lineage>
        <taxon>Bacteria</taxon>
        <taxon>Bacillati</taxon>
        <taxon>Bacillota</taxon>
        <taxon>Bacilli</taxon>
        <taxon>Bacillales</taxon>
        <taxon>Staphylococcaceae</taxon>
        <taxon>Macrococcoides</taxon>
    </lineage>
</organism>
<gene>
    <name type="primary">alr</name>
    <name type="ordered locus">MCCL_1734</name>
</gene>
<protein>
    <recommendedName>
        <fullName evidence="1">Alanine racemase</fullName>
        <ecNumber evidence="1">5.1.1.1</ecNumber>
    </recommendedName>
</protein>
<accession>B9E8C3</accession>
<dbReference type="EC" id="5.1.1.1" evidence="1"/>
<dbReference type="EMBL" id="AP009484">
    <property type="protein sequence ID" value="BAH18441.1"/>
    <property type="molecule type" value="Genomic_DNA"/>
</dbReference>
<dbReference type="RefSeq" id="WP_015912233.1">
    <property type="nucleotide sequence ID" value="NC_011999.1"/>
</dbReference>
<dbReference type="SMR" id="B9E8C3"/>
<dbReference type="STRING" id="458233.MCCL_1734"/>
<dbReference type="KEGG" id="mcl:MCCL_1734"/>
<dbReference type="eggNOG" id="COG0787">
    <property type="taxonomic scope" value="Bacteria"/>
</dbReference>
<dbReference type="HOGENOM" id="CLU_028393_2_1_9"/>
<dbReference type="OrthoDB" id="9813814at2"/>
<dbReference type="UniPathway" id="UPA00042">
    <property type="reaction ID" value="UER00497"/>
</dbReference>
<dbReference type="Proteomes" id="UP000001383">
    <property type="component" value="Chromosome"/>
</dbReference>
<dbReference type="GO" id="GO:0005829">
    <property type="term" value="C:cytosol"/>
    <property type="evidence" value="ECO:0007669"/>
    <property type="project" value="TreeGrafter"/>
</dbReference>
<dbReference type="GO" id="GO:0008784">
    <property type="term" value="F:alanine racemase activity"/>
    <property type="evidence" value="ECO:0007669"/>
    <property type="project" value="UniProtKB-UniRule"/>
</dbReference>
<dbReference type="GO" id="GO:0030170">
    <property type="term" value="F:pyridoxal phosphate binding"/>
    <property type="evidence" value="ECO:0007669"/>
    <property type="project" value="UniProtKB-UniRule"/>
</dbReference>
<dbReference type="GO" id="GO:0030632">
    <property type="term" value="P:D-alanine biosynthetic process"/>
    <property type="evidence" value="ECO:0007669"/>
    <property type="project" value="UniProtKB-UniRule"/>
</dbReference>
<dbReference type="GO" id="GO:0009252">
    <property type="term" value="P:peptidoglycan biosynthetic process"/>
    <property type="evidence" value="ECO:0007669"/>
    <property type="project" value="TreeGrafter"/>
</dbReference>
<dbReference type="CDD" id="cd00430">
    <property type="entry name" value="PLPDE_III_AR"/>
    <property type="match status" value="1"/>
</dbReference>
<dbReference type="FunFam" id="3.20.20.10:FF:000002">
    <property type="entry name" value="Alanine racemase"/>
    <property type="match status" value="1"/>
</dbReference>
<dbReference type="Gene3D" id="3.20.20.10">
    <property type="entry name" value="Alanine racemase"/>
    <property type="match status" value="1"/>
</dbReference>
<dbReference type="Gene3D" id="2.40.37.10">
    <property type="entry name" value="Lyase, Ornithine Decarboxylase, Chain A, domain 1"/>
    <property type="match status" value="1"/>
</dbReference>
<dbReference type="HAMAP" id="MF_01201">
    <property type="entry name" value="Ala_racemase"/>
    <property type="match status" value="1"/>
</dbReference>
<dbReference type="InterPro" id="IPR000821">
    <property type="entry name" value="Ala_racemase"/>
</dbReference>
<dbReference type="InterPro" id="IPR009006">
    <property type="entry name" value="Ala_racemase/Decarboxylase_C"/>
</dbReference>
<dbReference type="InterPro" id="IPR011079">
    <property type="entry name" value="Ala_racemase_C"/>
</dbReference>
<dbReference type="InterPro" id="IPR001608">
    <property type="entry name" value="Ala_racemase_N"/>
</dbReference>
<dbReference type="InterPro" id="IPR020622">
    <property type="entry name" value="Ala_racemase_pyridoxalP-BS"/>
</dbReference>
<dbReference type="InterPro" id="IPR029066">
    <property type="entry name" value="PLP-binding_barrel"/>
</dbReference>
<dbReference type="NCBIfam" id="TIGR00492">
    <property type="entry name" value="alr"/>
    <property type="match status" value="1"/>
</dbReference>
<dbReference type="PANTHER" id="PTHR30511">
    <property type="entry name" value="ALANINE RACEMASE"/>
    <property type="match status" value="1"/>
</dbReference>
<dbReference type="PANTHER" id="PTHR30511:SF0">
    <property type="entry name" value="ALANINE RACEMASE, CATABOLIC-RELATED"/>
    <property type="match status" value="1"/>
</dbReference>
<dbReference type="Pfam" id="PF00842">
    <property type="entry name" value="Ala_racemase_C"/>
    <property type="match status" value="1"/>
</dbReference>
<dbReference type="Pfam" id="PF01168">
    <property type="entry name" value="Ala_racemase_N"/>
    <property type="match status" value="1"/>
</dbReference>
<dbReference type="PRINTS" id="PR00992">
    <property type="entry name" value="ALARACEMASE"/>
</dbReference>
<dbReference type="SMART" id="SM01005">
    <property type="entry name" value="Ala_racemase_C"/>
    <property type="match status" value="1"/>
</dbReference>
<dbReference type="SUPFAM" id="SSF50621">
    <property type="entry name" value="Alanine racemase C-terminal domain-like"/>
    <property type="match status" value="1"/>
</dbReference>
<dbReference type="SUPFAM" id="SSF51419">
    <property type="entry name" value="PLP-binding barrel"/>
    <property type="match status" value="1"/>
</dbReference>
<dbReference type="PROSITE" id="PS00395">
    <property type="entry name" value="ALANINE_RACEMASE"/>
    <property type="match status" value="1"/>
</dbReference>
<evidence type="ECO:0000255" key="1">
    <source>
        <dbReference type="HAMAP-Rule" id="MF_01201"/>
    </source>
</evidence>
<sequence>MSDRYYRPTFVNVNLDAISSNFKHIEKLHPNKTVIAVIKANGYGLGSVNIAKHLMTSGTDFFAVATLDEAIELRMHGIKAKILVLGVVDPKHIRQASRHRLALTAPDAKWVEDASRYIEAEDKPVWLHIKVDSGMGRIGVQTKQAYDMVVDKVAAVEQFIFEGVFTHFSSADEDNALTERAYDKFLGIINDNKPQYIHCQNSAATLRYDCSECNAVRLGISLYGYYPSEFIRAVSNVKLQPAVQLVSTACFIKHIKSGDTVSYGATYTAQSDEVVATFPIGYADGLPRAMQGYNINLEGTEVPIIGRVCMDQMMARVPDDTLLGAQCIIIDNNADSNQSLERVAQQLGTITYEVLTSLSRRLPKRYYIGDDIEVYNELMK</sequence>
<feature type="chain" id="PRO_1000164603" description="Alanine racemase">
    <location>
        <begin position="1"/>
        <end position="380"/>
    </location>
</feature>
<feature type="active site" description="Proton acceptor; specific for D-alanine" evidence="1">
    <location>
        <position position="39"/>
    </location>
</feature>
<feature type="active site" description="Proton acceptor; specific for L-alanine" evidence="1">
    <location>
        <position position="263"/>
    </location>
</feature>
<feature type="binding site" evidence="1">
    <location>
        <position position="137"/>
    </location>
    <ligand>
        <name>substrate</name>
    </ligand>
</feature>
<feature type="binding site" evidence="1">
    <location>
        <position position="310"/>
    </location>
    <ligand>
        <name>substrate</name>
    </ligand>
</feature>
<feature type="modified residue" description="N6-(pyridoxal phosphate)lysine" evidence="1">
    <location>
        <position position="39"/>
    </location>
</feature>
<reference key="1">
    <citation type="journal article" date="2009" name="J. Bacteriol.">
        <title>Complete genome sequence of Macrococcus caseolyticus strain JCSCS5402, reflecting the ancestral genome of the human-pathogenic staphylococci.</title>
        <authorList>
            <person name="Baba T."/>
            <person name="Kuwahara-Arai K."/>
            <person name="Uchiyama I."/>
            <person name="Takeuchi F."/>
            <person name="Ito T."/>
            <person name="Hiramatsu K."/>
        </authorList>
    </citation>
    <scope>NUCLEOTIDE SEQUENCE [LARGE SCALE GENOMIC DNA]</scope>
    <source>
        <strain>JCSC5402</strain>
    </source>
</reference>